<protein>
    <recommendedName>
        <fullName evidence="1">Methylthioribose-1-phosphate isomerase</fullName>
        <shortName evidence="1">M1Pi</shortName>
        <shortName evidence="1">MTR-1-P isomerase</shortName>
        <ecNumber evidence="1">5.3.1.23</ecNumber>
    </recommendedName>
    <alternativeName>
        <fullName evidence="1">S-methyl-5-thioribose-1-phosphate isomerase</fullName>
    </alternativeName>
</protein>
<sequence length="344" mass="36649">MSIKPIEYRDGVVRMIDQRLLPTQELWLEYRDYQAVAEAILTMVVRGAPAIGVAAAYGAALGARDIEADSFESFLAALKNVCDTLAATRPTAVNLFWALERMQAKARELAALPLDAIKAALMDEAQAIAAQDDAINRAMGRHGAELIADNARVLTHCNAGALATGGYGTALGVIRAAVESGKKISVLADETRPFLQGSRLTAWELHKDGIPVTLICDNMAGALMRQGEIDCVIVGADRIAANGDVANKIGTYSVAVLAKEHGLPFYVAAPLSTIDLKIPDGDHIPIEERDTSEVTHCGPTRLAPEGINVRNPAFDVTPAGLITAIITERGVVRGDYVRGLANLF</sequence>
<dbReference type="EC" id="5.3.1.23" evidence="1"/>
<dbReference type="EMBL" id="CP000142">
    <property type="protein sequence ID" value="ABA89409.1"/>
    <property type="molecule type" value="Genomic_DNA"/>
</dbReference>
<dbReference type="RefSeq" id="WP_011341922.1">
    <property type="nucleotide sequence ID" value="NC_007498.2"/>
</dbReference>
<dbReference type="SMR" id="Q3A2J8"/>
<dbReference type="STRING" id="338963.Pcar_2170"/>
<dbReference type="KEGG" id="pca:Pcar_2170"/>
<dbReference type="eggNOG" id="COG0182">
    <property type="taxonomic scope" value="Bacteria"/>
</dbReference>
<dbReference type="HOGENOM" id="CLU_016218_1_2_7"/>
<dbReference type="OrthoDB" id="9803436at2"/>
<dbReference type="UniPathway" id="UPA00904">
    <property type="reaction ID" value="UER00874"/>
</dbReference>
<dbReference type="Proteomes" id="UP000002534">
    <property type="component" value="Chromosome"/>
</dbReference>
<dbReference type="GO" id="GO:0046523">
    <property type="term" value="F:S-methyl-5-thioribose-1-phosphate isomerase activity"/>
    <property type="evidence" value="ECO:0007669"/>
    <property type="project" value="UniProtKB-UniRule"/>
</dbReference>
<dbReference type="GO" id="GO:0019509">
    <property type="term" value="P:L-methionine salvage from methylthioadenosine"/>
    <property type="evidence" value="ECO:0007669"/>
    <property type="project" value="UniProtKB-UniRule"/>
</dbReference>
<dbReference type="FunFam" id="1.20.120.420:FF:000003">
    <property type="entry name" value="Methylthioribose-1-phosphate isomerase"/>
    <property type="match status" value="1"/>
</dbReference>
<dbReference type="FunFam" id="3.40.50.10470:FF:000010">
    <property type="entry name" value="Methylthioribose-1-phosphate isomerase"/>
    <property type="match status" value="1"/>
</dbReference>
<dbReference type="Gene3D" id="1.20.120.420">
    <property type="entry name" value="translation initiation factor eif-2b, domain 1"/>
    <property type="match status" value="1"/>
</dbReference>
<dbReference type="Gene3D" id="3.40.50.10470">
    <property type="entry name" value="Translation initiation factor eif-2b, domain 2"/>
    <property type="match status" value="1"/>
</dbReference>
<dbReference type="HAMAP" id="MF_01678">
    <property type="entry name" value="Salvage_MtnA"/>
    <property type="match status" value="1"/>
</dbReference>
<dbReference type="InterPro" id="IPR000649">
    <property type="entry name" value="IF-2B-related"/>
</dbReference>
<dbReference type="InterPro" id="IPR005251">
    <property type="entry name" value="IF-M1Pi"/>
</dbReference>
<dbReference type="InterPro" id="IPR042529">
    <property type="entry name" value="IF_2B-like_C"/>
</dbReference>
<dbReference type="InterPro" id="IPR011559">
    <property type="entry name" value="Initiation_fac_2B_a/b/d"/>
</dbReference>
<dbReference type="InterPro" id="IPR027363">
    <property type="entry name" value="M1Pi_N"/>
</dbReference>
<dbReference type="InterPro" id="IPR037171">
    <property type="entry name" value="NagB/RpiA_transferase-like"/>
</dbReference>
<dbReference type="NCBIfam" id="TIGR00524">
    <property type="entry name" value="eIF-2B_rel"/>
    <property type="match status" value="1"/>
</dbReference>
<dbReference type="NCBIfam" id="NF004326">
    <property type="entry name" value="PRK05720.1"/>
    <property type="match status" value="1"/>
</dbReference>
<dbReference type="NCBIfam" id="TIGR00512">
    <property type="entry name" value="salvage_mtnA"/>
    <property type="match status" value="1"/>
</dbReference>
<dbReference type="PANTHER" id="PTHR43475">
    <property type="entry name" value="METHYLTHIORIBOSE-1-PHOSPHATE ISOMERASE"/>
    <property type="match status" value="1"/>
</dbReference>
<dbReference type="PANTHER" id="PTHR43475:SF1">
    <property type="entry name" value="METHYLTHIORIBOSE-1-PHOSPHATE ISOMERASE"/>
    <property type="match status" value="1"/>
</dbReference>
<dbReference type="Pfam" id="PF01008">
    <property type="entry name" value="IF-2B"/>
    <property type="match status" value="1"/>
</dbReference>
<dbReference type="SUPFAM" id="SSF100950">
    <property type="entry name" value="NagB/RpiA/CoA transferase-like"/>
    <property type="match status" value="1"/>
</dbReference>
<name>MTNA_SYNC1</name>
<proteinExistence type="inferred from homology"/>
<comment type="function">
    <text evidence="1">Catalyzes the interconversion of methylthioribose-1-phosphate (MTR-1-P) into methylthioribulose-1-phosphate (MTRu-1-P).</text>
</comment>
<comment type="catalytic activity">
    <reaction evidence="1">
        <text>5-(methylsulfanyl)-alpha-D-ribose 1-phosphate = 5-(methylsulfanyl)-D-ribulose 1-phosphate</text>
        <dbReference type="Rhea" id="RHEA:19989"/>
        <dbReference type="ChEBI" id="CHEBI:58533"/>
        <dbReference type="ChEBI" id="CHEBI:58548"/>
        <dbReference type="EC" id="5.3.1.23"/>
    </reaction>
</comment>
<comment type="pathway">
    <text evidence="1">Amino-acid biosynthesis; L-methionine biosynthesis via salvage pathway; L-methionine from S-methyl-5-thio-alpha-D-ribose 1-phosphate: step 1/6.</text>
</comment>
<comment type="similarity">
    <text evidence="2">Belongs to the eIF-2B alpha/beta/delta subunits family. MtnA subfamily.</text>
</comment>
<gene>
    <name evidence="1" type="primary">mtnA</name>
    <name type="ordered locus">Pcar_2170</name>
</gene>
<organism>
    <name type="scientific">Syntrophotalea carbinolica (strain DSM 2380 / NBRC 103641 / GraBd1)</name>
    <name type="common">Pelobacter carbinolicus</name>
    <dbReference type="NCBI Taxonomy" id="338963"/>
    <lineage>
        <taxon>Bacteria</taxon>
        <taxon>Pseudomonadati</taxon>
        <taxon>Thermodesulfobacteriota</taxon>
        <taxon>Desulfuromonadia</taxon>
        <taxon>Desulfuromonadales</taxon>
        <taxon>Syntrophotaleaceae</taxon>
        <taxon>Syntrophotalea</taxon>
    </lineage>
</organism>
<accession>Q3A2J8</accession>
<feature type="chain" id="PRO_0000357215" description="Methylthioribose-1-phosphate isomerase">
    <location>
        <begin position="1"/>
        <end position="344"/>
    </location>
</feature>
<feature type="active site" description="Proton donor" evidence="1">
    <location>
        <position position="237"/>
    </location>
</feature>
<feature type="binding site" evidence="1">
    <location>
        <begin position="46"/>
        <end position="48"/>
    </location>
    <ligand>
        <name>substrate</name>
    </ligand>
</feature>
<feature type="binding site" evidence="1">
    <location>
        <position position="89"/>
    </location>
    <ligand>
        <name>substrate</name>
    </ligand>
</feature>
<feature type="binding site" evidence="1">
    <location>
        <position position="196"/>
    </location>
    <ligand>
        <name>substrate</name>
    </ligand>
</feature>
<feature type="binding site" evidence="1">
    <location>
        <begin position="247"/>
        <end position="248"/>
    </location>
    <ligand>
        <name>substrate</name>
    </ligand>
</feature>
<feature type="site" description="Transition state stabilizer" evidence="1">
    <location>
        <position position="157"/>
    </location>
</feature>
<evidence type="ECO:0000255" key="1">
    <source>
        <dbReference type="HAMAP-Rule" id="MF_01678"/>
    </source>
</evidence>
<evidence type="ECO:0000305" key="2"/>
<keyword id="KW-0028">Amino-acid biosynthesis</keyword>
<keyword id="KW-0413">Isomerase</keyword>
<keyword id="KW-0486">Methionine biosynthesis</keyword>
<keyword id="KW-1185">Reference proteome</keyword>
<reference key="1">
    <citation type="submission" date="2005-10" db="EMBL/GenBank/DDBJ databases">
        <title>Complete sequence of Pelobacter carbinolicus DSM 2380.</title>
        <authorList>
            <person name="Copeland A."/>
            <person name="Lucas S."/>
            <person name="Lapidus A."/>
            <person name="Barry K."/>
            <person name="Detter J.C."/>
            <person name="Glavina T."/>
            <person name="Hammon N."/>
            <person name="Israni S."/>
            <person name="Pitluck S."/>
            <person name="Chertkov O."/>
            <person name="Schmutz J."/>
            <person name="Larimer F."/>
            <person name="Land M."/>
            <person name="Kyrpides N."/>
            <person name="Ivanova N."/>
            <person name="Richardson P."/>
        </authorList>
    </citation>
    <scope>NUCLEOTIDE SEQUENCE [LARGE SCALE GENOMIC DNA]</scope>
    <source>
        <strain>DSM 2380 / NBRC 103641 / GraBd1</strain>
    </source>
</reference>